<gene>
    <name type="primary">Amy58</name>
    <name type="synonym">Amy2</name>
    <name type="ORF">GF18843</name>
</gene>
<reference key="1">
    <citation type="journal article" date="1998" name="Proc. Natl. Acad. Sci. U.S.A.">
        <title>Amyrel, a paralogous gene of the amylase gene family in Drosophila melanogaster and the Sophophora subgenus.</title>
        <authorList>
            <person name="Da Lage J.-L."/>
            <person name="Renard E."/>
            <person name="Chartois F."/>
            <person name="Lemeunier F."/>
            <person name="Cariou M.-L."/>
        </authorList>
    </citation>
    <scope>NUCLEOTIDE SEQUENCE [GENOMIC DNA]</scope>
    <source>
        <strain>Tai 13-1610</strain>
    </source>
</reference>
<reference key="2">
    <citation type="journal article" date="2007" name="Nature">
        <title>Evolution of genes and genomes on the Drosophila phylogeny.</title>
        <authorList>
            <consortium name="Drosophila 12 genomes consortium"/>
        </authorList>
    </citation>
    <scope>NUCLEOTIDE SEQUENCE [LARGE SCALE GENOMIC DNA]</scope>
    <source>
        <strain>Tucson 14024-0371.13</strain>
    </source>
</reference>
<reference key="3">
    <citation type="journal article" date="2000" name="J. Mol. Evol.">
        <title>Molecular characterization and evolution of the amylase multigene family of Drosophila ananassae.</title>
        <authorList>
            <person name="Da Lage J.-L."/>
            <person name="Maczkowiak F."/>
            <person name="Cariou M.-L."/>
        </authorList>
    </citation>
    <scope>NUCLEOTIDE SEQUENCE [GENOMIC DNA] OF 1-34</scope>
    <source>
        <strain>371-1</strain>
        <strain>Beruwala</strain>
        <strain>Bouake</strain>
        <strain>Brazzaville</strain>
        <strain>Colombo</strain>
        <strain>Guadeloupe</strain>
        <strain>Korat3422</strain>
        <strain>Lambir</strain>
        <strain>Mauritius</strain>
        <strain>Mexico</strain>
        <strain>Porto Rico</strain>
        <strain>Reunion</strain>
        <strain>Sao Paulo</strain>
        <strain>Tai 13-1610</strain>
    </source>
</reference>
<protein>
    <recommendedName>
        <fullName>Alpha-amylase 2</fullName>
        <ecNumber evidence="2">3.2.1.1</ecNumber>
    </recommendedName>
</protein>
<comment type="catalytic activity">
    <reaction evidence="2">
        <text>Endohydrolysis of (1-&gt;4)-alpha-D-glucosidic linkages in polysaccharides containing three or more (1-&gt;4)-alpha-linked D-glucose units.</text>
        <dbReference type="EC" id="3.2.1.1"/>
    </reaction>
</comment>
<comment type="cofactor">
    <cofactor evidence="2">
        <name>Ca(2+)</name>
        <dbReference type="ChEBI" id="CHEBI:29108"/>
    </cofactor>
    <text evidence="2">Binds 1 Ca(2+) ion per subunit.</text>
</comment>
<comment type="cofactor">
    <cofactor evidence="2">
        <name>chloride</name>
        <dbReference type="ChEBI" id="CHEBI:17996"/>
    </cofactor>
    <text evidence="2">Binds 1 Cl(-) ion per subunit.</text>
</comment>
<comment type="subunit">
    <text evidence="1">Monomer.</text>
</comment>
<comment type="similarity">
    <text evidence="5">Belongs to the glycosyl hydrolase 13 family.</text>
</comment>
<organism>
    <name type="scientific">Drosophila ananassae</name>
    <name type="common">Fruit fly</name>
    <dbReference type="NCBI Taxonomy" id="7217"/>
    <lineage>
        <taxon>Eukaryota</taxon>
        <taxon>Metazoa</taxon>
        <taxon>Ecdysozoa</taxon>
        <taxon>Arthropoda</taxon>
        <taxon>Hexapoda</taxon>
        <taxon>Insecta</taxon>
        <taxon>Pterygota</taxon>
        <taxon>Neoptera</taxon>
        <taxon>Endopterygota</taxon>
        <taxon>Diptera</taxon>
        <taxon>Brachycera</taxon>
        <taxon>Muscomorpha</taxon>
        <taxon>Ephydroidea</taxon>
        <taxon>Drosophilidae</taxon>
        <taxon>Drosophila</taxon>
        <taxon>Sophophora</taxon>
    </lineage>
</organism>
<evidence type="ECO:0000250" key="1"/>
<evidence type="ECO:0000250" key="2">
    <source>
        <dbReference type="UniProtKB" id="P04746"/>
    </source>
</evidence>
<evidence type="ECO:0000255" key="3"/>
<evidence type="ECO:0000256" key="4">
    <source>
        <dbReference type="SAM" id="MobiDB-lite"/>
    </source>
</evidence>
<evidence type="ECO:0000305" key="5"/>
<proteinExistence type="inferred from homology"/>
<accession>O18345</accession>
<accession>B3LZH0</accession>
<accession>Q9GN73</accession>
<feature type="signal peptide" evidence="3">
    <location>
        <begin position="1"/>
        <end position="18"/>
    </location>
</feature>
<feature type="chain" id="PRO_0000001361" description="Alpha-amylase 2">
    <location>
        <begin position="19"/>
        <end position="494"/>
    </location>
</feature>
<feature type="region of interest" description="Disordered" evidence="4">
    <location>
        <begin position="350"/>
        <end position="370"/>
    </location>
</feature>
<feature type="compositionally biased region" description="Low complexity" evidence="4">
    <location>
        <begin position="351"/>
        <end position="363"/>
    </location>
</feature>
<feature type="active site" description="Nucleophile" evidence="2">
    <location>
        <position position="204"/>
    </location>
</feature>
<feature type="active site" description="Proton donor" evidence="2">
    <location>
        <position position="241"/>
    </location>
</feature>
<feature type="binding site" evidence="2">
    <location>
        <position position="116"/>
    </location>
    <ligand>
        <name>Ca(2+)</name>
        <dbReference type="ChEBI" id="CHEBI:29108"/>
    </ligand>
</feature>
<feature type="binding site" evidence="2">
    <location>
        <position position="165"/>
    </location>
    <ligand>
        <name>Ca(2+)</name>
        <dbReference type="ChEBI" id="CHEBI:29108"/>
    </ligand>
</feature>
<feature type="binding site" evidence="2">
    <location>
        <position position="174"/>
    </location>
    <ligand>
        <name>Ca(2+)</name>
        <dbReference type="ChEBI" id="CHEBI:29108"/>
    </ligand>
</feature>
<feature type="binding site" evidence="2">
    <location>
        <position position="202"/>
    </location>
    <ligand>
        <name>chloride</name>
        <dbReference type="ChEBI" id="CHEBI:17996"/>
    </ligand>
</feature>
<feature type="binding site" evidence="2">
    <location>
        <position position="208"/>
    </location>
    <ligand>
        <name>Ca(2+)</name>
        <dbReference type="ChEBI" id="CHEBI:29108"/>
    </ligand>
</feature>
<feature type="binding site" evidence="2">
    <location>
        <position position="304"/>
    </location>
    <ligand>
        <name>chloride</name>
        <dbReference type="ChEBI" id="CHEBI:17996"/>
    </ligand>
</feature>
<feature type="binding site" evidence="2">
    <location>
        <position position="343"/>
    </location>
    <ligand>
        <name>chloride</name>
        <dbReference type="ChEBI" id="CHEBI:17996"/>
    </ligand>
</feature>
<feature type="site" description="Transition state stabilizer" evidence="2">
    <location>
        <position position="306"/>
    </location>
</feature>
<feature type="disulfide bond" evidence="2">
    <location>
        <begin position="46"/>
        <end position="102"/>
    </location>
</feature>
<feature type="disulfide bond" evidence="2">
    <location>
        <begin position="153"/>
        <end position="167"/>
    </location>
</feature>
<feature type="disulfide bond" evidence="2">
    <location>
        <begin position="376"/>
        <end position="382"/>
    </location>
</feature>
<feature type="disulfide bond" evidence="2">
    <location>
        <begin position="448"/>
        <end position="460"/>
    </location>
</feature>
<feature type="sequence conflict" description="In Ref. 1; AAC79122." evidence="5" ref="1">
    <original>A</original>
    <variation>P</variation>
    <location>
        <position position="25"/>
    </location>
</feature>
<feature type="sequence conflict" description="In Ref. 1; AAC79122." evidence="5" ref="1">
    <original>V</original>
    <variation>A</variation>
    <location>
        <position position="63"/>
    </location>
</feature>
<feature type="sequence conflict" description="In Ref. 1; AAC79122." evidence="5" ref="1">
    <original>G</original>
    <variation>A</variation>
    <location>
        <position position="128"/>
    </location>
</feature>
<keyword id="KW-0106">Calcium</keyword>
<keyword id="KW-0119">Carbohydrate metabolism</keyword>
<keyword id="KW-0868">Chloride</keyword>
<keyword id="KW-1015">Disulfide bond</keyword>
<keyword id="KW-0326">Glycosidase</keyword>
<keyword id="KW-0378">Hydrolase</keyword>
<keyword id="KW-0479">Metal-binding</keyword>
<keyword id="KW-1185">Reference proteome</keyword>
<keyword id="KW-0732">Signal</keyword>
<dbReference type="EC" id="3.2.1.1" evidence="2"/>
<dbReference type="EMBL" id="U53698">
    <property type="protein sequence ID" value="AAC79122.1"/>
    <property type="molecule type" value="Genomic_DNA"/>
</dbReference>
<dbReference type="EMBL" id="CH902617">
    <property type="protein sequence ID" value="EDV44149.1"/>
    <property type="molecule type" value="Genomic_DNA"/>
</dbReference>
<dbReference type="EMBL" id="AF238958">
    <property type="protein sequence ID" value="AAG45312.1"/>
    <property type="molecule type" value="Genomic_DNA"/>
</dbReference>
<dbReference type="EMBL" id="AF238959">
    <property type="protein sequence ID" value="AAG45313.1"/>
    <property type="molecule type" value="Genomic_DNA"/>
</dbReference>
<dbReference type="EMBL" id="AF238960">
    <property type="protein sequence ID" value="AAG45314.1"/>
    <property type="molecule type" value="Genomic_DNA"/>
</dbReference>
<dbReference type="EMBL" id="AF238961">
    <property type="protein sequence ID" value="AAG45315.1"/>
    <property type="molecule type" value="Genomic_DNA"/>
</dbReference>
<dbReference type="EMBL" id="AF238962">
    <property type="protein sequence ID" value="AAG45316.1"/>
    <property type="molecule type" value="Genomic_DNA"/>
</dbReference>
<dbReference type="EMBL" id="AF238963">
    <property type="protein sequence ID" value="AAG45317.1"/>
    <property type="molecule type" value="Genomic_DNA"/>
</dbReference>
<dbReference type="EMBL" id="AF238964">
    <property type="protein sequence ID" value="AAG45318.1"/>
    <property type="molecule type" value="Genomic_DNA"/>
</dbReference>
<dbReference type="EMBL" id="AF238965">
    <property type="protein sequence ID" value="AAG45319.1"/>
    <property type="molecule type" value="Genomic_DNA"/>
</dbReference>
<dbReference type="EMBL" id="AF238966">
    <property type="protein sequence ID" value="AAG45320.1"/>
    <property type="molecule type" value="Genomic_DNA"/>
</dbReference>
<dbReference type="EMBL" id="AF238967">
    <property type="protein sequence ID" value="AAG45321.1"/>
    <property type="molecule type" value="Genomic_DNA"/>
</dbReference>
<dbReference type="EMBL" id="AF238968">
    <property type="protein sequence ID" value="AAG45322.1"/>
    <property type="molecule type" value="Genomic_DNA"/>
</dbReference>
<dbReference type="EMBL" id="AF238969">
    <property type="protein sequence ID" value="AAG45323.1"/>
    <property type="molecule type" value="Genomic_DNA"/>
</dbReference>
<dbReference type="EMBL" id="AF238970">
    <property type="protein sequence ID" value="AAG45324.1"/>
    <property type="molecule type" value="Genomic_DNA"/>
</dbReference>
<dbReference type="EMBL" id="AF238971">
    <property type="protein sequence ID" value="AAG45325.1"/>
    <property type="molecule type" value="Genomic_DNA"/>
</dbReference>
<dbReference type="EMBL" id="AF238972">
    <property type="protein sequence ID" value="AAG45326.1"/>
    <property type="molecule type" value="Genomic_DNA"/>
</dbReference>
<dbReference type="EMBL" id="AF238973">
    <property type="protein sequence ID" value="AAG45327.1"/>
    <property type="molecule type" value="Genomic_DNA"/>
</dbReference>
<dbReference type="EMBL" id="AF238974">
    <property type="protein sequence ID" value="AAG45328.1"/>
    <property type="molecule type" value="Genomic_DNA"/>
</dbReference>
<dbReference type="EMBL" id="AF238975">
    <property type="protein sequence ID" value="AAG45329.1"/>
    <property type="molecule type" value="Genomic_DNA"/>
</dbReference>
<dbReference type="EMBL" id="AF238976">
    <property type="protein sequence ID" value="AAG45330.1"/>
    <property type="molecule type" value="Genomic_DNA"/>
</dbReference>
<dbReference type="EMBL" id="AF238977">
    <property type="protein sequence ID" value="AAG45331.1"/>
    <property type="molecule type" value="Genomic_DNA"/>
</dbReference>
<dbReference type="SMR" id="O18345"/>
<dbReference type="FunCoup" id="O18345">
    <property type="interactions" value="31"/>
</dbReference>
<dbReference type="STRING" id="7217.O18345"/>
<dbReference type="CAZy" id="GH13">
    <property type="family name" value="Glycoside Hydrolase Family 13"/>
</dbReference>
<dbReference type="EnsemblMetazoa" id="FBtr0123543">
    <property type="protein sequence ID" value="FBpp0122035"/>
    <property type="gene ID" value="FBgn0261676"/>
</dbReference>
<dbReference type="EnsemblMetazoa" id="XM_001955552.4">
    <property type="protein sequence ID" value="XP_001955588.1"/>
    <property type="gene ID" value="LOC6501610"/>
</dbReference>
<dbReference type="GeneID" id="6501610"/>
<dbReference type="KEGG" id="dan:6501610"/>
<dbReference type="eggNOG" id="KOG2212">
    <property type="taxonomic scope" value="Eukaryota"/>
</dbReference>
<dbReference type="HOGENOM" id="CLU_013336_2_1_1"/>
<dbReference type="InParanoid" id="O18345"/>
<dbReference type="OMA" id="FRYGMEL"/>
<dbReference type="OrthoDB" id="550577at2759"/>
<dbReference type="PhylomeDB" id="O18345"/>
<dbReference type="Proteomes" id="UP000007801">
    <property type="component" value="Unassembled WGS sequence"/>
</dbReference>
<dbReference type="GO" id="GO:0004556">
    <property type="term" value="F:alpha-amylase activity"/>
    <property type="evidence" value="ECO:0007669"/>
    <property type="project" value="UniProtKB-EC"/>
</dbReference>
<dbReference type="GO" id="GO:0046872">
    <property type="term" value="F:metal ion binding"/>
    <property type="evidence" value="ECO:0007669"/>
    <property type="project" value="UniProtKB-KW"/>
</dbReference>
<dbReference type="GO" id="GO:0005975">
    <property type="term" value="P:carbohydrate metabolic process"/>
    <property type="evidence" value="ECO:0007669"/>
    <property type="project" value="InterPro"/>
</dbReference>
<dbReference type="CDD" id="cd11317">
    <property type="entry name" value="AmyAc_bac_euk_AmyA"/>
    <property type="match status" value="1"/>
</dbReference>
<dbReference type="FunFam" id="2.60.40.1180:FF:000020">
    <property type="entry name" value="Pancreatic alpha-amylase"/>
    <property type="match status" value="1"/>
</dbReference>
<dbReference type="FunFam" id="3.20.20.80:FF:000056">
    <property type="entry name" value="Pancreatic alpha-amylase"/>
    <property type="match status" value="1"/>
</dbReference>
<dbReference type="Gene3D" id="3.20.20.80">
    <property type="entry name" value="Glycosidases"/>
    <property type="match status" value="1"/>
</dbReference>
<dbReference type="Gene3D" id="2.60.40.1180">
    <property type="entry name" value="Golgi alpha-mannosidase II"/>
    <property type="match status" value="1"/>
</dbReference>
<dbReference type="InterPro" id="IPR006048">
    <property type="entry name" value="A-amylase/branching_C"/>
</dbReference>
<dbReference type="InterPro" id="IPR031319">
    <property type="entry name" value="A-amylase_C"/>
</dbReference>
<dbReference type="InterPro" id="IPR006046">
    <property type="entry name" value="Alpha_amylase"/>
</dbReference>
<dbReference type="InterPro" id="IPR006047">
    <property type="entry name" value="Glyco_hydro_13_cat_dom"/>
</dbReference>
<dbReference type="InterPro" id="IPR013780">
    <property type="entry name" value="Glyco_hydro_b"/>
</dbReference>
<dbReference type="InterPro" id="IPR017853">
    <property type="entry name" value="Glycoside_hydrolase_SF"/>
</dbReference>
<dbReference type="PANTHER" id="PTHR43447">
    <property type="entry name" value="ALPHA-AMYLASE"/>
    <property type="match status" value="1"/>
</dbReference>
<dbReference type="Pfam" id="PF00128">
    <property type="entry name" value="Alpha-amylase"/>
    <property type="match status" value="1"/>
</dbReference>
<dbReference type="Pfam" id="PF02806">
    <property type="entry name" value="Alpha-amylase_C"/>
    <property type="match status" value="1"/>
</dbReference>
<dbReference type="PRINTS" id="PR00110">
    <property type="entry name" value="ALPHAAMYLASE"/>
</dbReference>
<dbReference type="SMART" id="SM00642">
    <property type="entry name" value="Aamy"/>
    <property type="match status" value="1"/>
</dbReference>
<dbReference type="SMART" id="SM00632">
    <property type="entry name" value="Aamy_C"/>
    <property type="match status" value="1"/>
</dbReference>
<dbReference type="SUPFAM" id="SSF51445">
    <property type="entry name" value="(Trans)glycosidases"/>
    <property type="match status" value="1"/>
</dbReference>
<dbReference type="SUPFAM" id="SSF51011">
    <property type="entry name" value="Glycosyl hydrolase domain"/>
    <property type="match status" value="1"/>
</dbReference>
<sequence length="494" mass="53576">MFLAKSIVCLALLAVANAQFNTNYASGRSGMVHLFEWKWDDIAAECENFLGPYGYAGVQVSPVNENAVKDSRPWWERYQPISYKLVTRSGNEEQFASMVRRCNNVGVRIYVDVVFNHMAADGGTYGTGGSTASPSSKSYPGVPFSSLDFNPTCAISNYNDANQVRNCELVGLRDLNQGNSYVQEKIVEFLNHLIDLGVAGFRVDAAKHMWPADLGVIYGSLKNLNTDHGFESGAKAYIVQEVIDMGGEAISKSEYTGLGAITEFRHSDSIGKAFRGKNQLQYLVNWGVSWGFAASDRSLVFVDNHDNQRGHGAGGADVLTYKVPKQYKMASAFMLAHPFGTPRVMSSFSFTDTDQGPPTTDGQNIASPSFNSDNSCSGGWVCEHRWKQIYNMVGFRNAVGSDAIQNWWDNGSNQIAFSRGSKGFVAFNNDNYDLNSSVQTGLPAGTYCDVISGSKSGSSCTGKTVTVGSDGRANISIGSSEDDGVLAIHVNAKL</sequence>
<name>AMY2_DROAN</name>